<accession>Q1IZP1</accession>
<reference key="1">
    <citation type="submission" date="2006-04" db="EMBL/GenBank/DDBJ databases">
        <title>Complete sequence of chromosome of Deinococcus geothermalis DSM 11300.</title>
        <authorList>
            <person name="Copeland A."/>
            <person name="Lucas S."/>
            <person name="Lapidus A."/>
            <person name="Barry K."/>
            <person name="Detter J.C."/>
            <person name="Glavina del Rio T."/>
            <person name="Hammon N."/>
            <person name="Israni S."/>
            <person name="Dalin E."/>
            <person name="Tice H."/>
            <person name="Pitluck S."/>
            <person name="Brettin T."/>
            <person name="Bruce D."/>
            <person name="Han C."/>
            <person name="Tapia R."/>
            <person name="Saunders E."/>
            <person name="Gilna P."/>
            <person name="Schmutz J."/>
            <person name="Larimer F."/>
            <person name="Land M."/>
            <person name="Hauser L."/>
            <person name="Kyrpides N."/>
            <person name="Kim E."/>
            <person name="Daly M.J."/>
            <person name="Fredrickson J.K."/>
            <person name="Makarova K.S."/>
            <person name="Gaidamakova E.K."/>
            <person name="Zhai M."/>
            <person name="Richardson P."/>
        </authorList>
    </citation>
    <scope>NUCLEOTIDE SEQUENCE [LARGE SCALE GENOMIC DNA]</scope>
    <source>
        <strain>DSM 11300 / CIP 105573 / AG-3a</strain>
    </source>
</reference>
<proteinExistence type="inferred from homology"/>
<sequence>MTTETLTVRDLGLRARAAARVLRSLPTARKAAALHAIARELQAREGVILAANARDVAAAEAARLPAHMVARLRLDAASLAAIADDVAAVAQLPDPVGETTPERILPSGIRVSQRRVPLGVLGVIYESRPNVTVDVAALALMSGNAVILRGGKETVNSNAALEGAIRAALASENIPEDAVQVIRDPARERMLELLRLDDLVDAIIPRGGAGLHRFCVENATVPVIVGGIGVVHIYLDESFTRDPADVARAVNLIRNAKVQKPSACNALDTLLIHVRALPVLPAIARDLTAHGVTLRADPPALAALQTAGLEAQAATDADYGTEFLALTASIRTVSGLEEALDFIAAHGNHTDVILTRDPTQAERFVQDVDSAAVMVNASPRFNDGGQLGLGAEVAISTQKLHARGPMGLRELTTTKWVVVGDGQVRE</sequence>
<protein>
    <recommendedName>
        <fullName evidence="1">Gamma-glutamyl phosphate reductase</fullName>
        <shortName evidence="1">GPR</shortName>
        <ecNumber evidence="1">1.2.1.41</ecNumber>
    </recommendedName>
    <alternativeName>
        <fullName evidence="1">Glutamate-5-semialdehyde dehydrogenase</fullName>
    </alternativeName>
    <alternativeName>
        <fullName evidence="1">Glutamyl-gamma-semialdehyde dehydrogenase</fullName>
        <shortName evidence="1">GSA dehydrogenase</shortName>
    </alternativeName>
</protein>
<evidence type="ECO:0000255" key="1">
    <source>
        <dbReference type="HAMAP-Rule" id="MF_00412"/>
    </source>
</evidence>
<evidence type="ECO:0000305" key="2"/>
<organism>
    <name type="scientific">Deinococcus geothermalis (strain DSM 11300 / CIP 105573 / AG-3a)</name>
    <dbReference type="NCBI Taxonomy" id="319795"/>
    <lineage>
        <taxon>Bacteria</taxon>
        <taxon>Thermotogati</taxon>
        <taxon>Deinococcota</taxon>
        <taxon>Deinococci</taxon>
        <taxon>Deinococcales</taxon>
        <taxon>Deinococcaceae</taxon>
        <taxon>Deinococcus</taxon>
    </lineage>
</organism>
<gene>
    <name evidence="1" type="primary">proA</name>
    <name type="ordered locus">Dgeo_0993</name>
</gene>
<keyword id="KW-0028">Amino-acid biosynthesis</keyword>
<keyword id="KW-0963">Cytoplasm</keyword>
<keyword id="KW-0521">NADP</keyword>
<keyword id="KW-0560">Oxidoreductase</keyword>
<keyword id="KW-0641">Proline biosynthesis</keyword>
<feature type="chain" id="PRO_0000252569" description="Gamma-glutamyl phosphate reductase">
    <location>
        <begin position="1"/>
        <end position="426"/>
    </location>
</feature>
<name>PROA_DEIGD</name>
<comment type="function">
    <text evidence="1">Catalyzes the NADPH-dependent reduction of L-glutamate 5-phosphate into L-glutamate 5-semialdehyde and phosphate. The product spontaneously undergoes cyclization to form 1-pyrroline-5-carboxylate.</text>
</comment>
<comment type="catalytic activity">
    <reaction evidence="1">
        <text>L-glutamate 5-semialdehyde + phosphate + NADP(+) = L-glutamyl 5-phosphate + NADPH + H(+)</text>
        <dbReference type="Rhea" id="RHEA:19541"/>
        <dbReference type="ChEBI" id="CHEBI:15378"/>
        <dbReference type="ChEBI" id="CHEBI:43474"/>
        <dbReference type="ChEBI" id="CHEBI:57783"/>
        <dbReference type="ChEBI" id="CHEBI:58066"/>
        <dbReference type="ChEBI" id="CHEBI:58274"/>
        <dbReference type="ChEBI" id="CHEBI:58349"/>
        <dbReference type="EC" id="1.2.1.41"/>
    </reaction>
</comment>
<comment type="pathway">
    <text evidence="1">Amino-acid biosynthesis; L-proline biosynthesis; L-glutamate 5-semialdehyde from L-glutamate: step 2/2.</text>
</comment>
<comment type="subcellular location">
    <subcellularLocation>
        <location evidence="1">Cytoplasm</location>
    </subcellularLocation>
</comment>
<comment type="similarity">
    <text evidence="1">Belongs to the gamma-glutamyl phosphate reductase family.</text>
</comment>
<comment type="sequence caution" evidence="2">
    <conflict type="erroneous initiation">
        <sequence resource="EMBL-CDS" id="ABF45293"/>
    </conflict>
</comment>
<dbReference type="EC" id="1.2.1.41" evidence="1"/>
<dbReference type="EMBL" id="CP000359">
    <property type="protein sequence ID" value="ABF45293.1"/>
    <property type="status" value="ALT_INIT"/>
    <property type="molecule type" value="Genomic_DNA"/>
</dbReference>
<dbReference type="RefSeq" id="WP_041221083.1">
    <property type="nucleotide sequence ID" value="NC_008025.1"/>
</dbReference>
<dbReference type="SMR" id="Q1IZP1"/>
<dbReference type="STRING" id="319795.Dgeo_0993"/>
<dbReference type="KEGG" id="dge:Dgeo_0993"/>
<dbReference type="eggNOG" id="COG0014">
    <property type="taxonomic scope" value="Bacteria"/>
</dbReference>
<dbReference type="HOGENOM" id="CLU_030231_0_0_0"/>
<dbReference type="UniPathway" id="UPA00098">
    <property type="reaction ID" value="UER00360"/>
</dbReference>
<dbReference type="Proteomes" id="UP000002431">
    <property type="component" value="Chromosome"/>
</dbReference>
<dbReference type="GO" id="GO:0005737">
    <property type="term" value="C:cytoplasm"/>
    <property type="evidence" value="ECO:0007669"/>
    <property type="project" value="UniProtKB-SubCell"/>
</dbReference>
<dbReference type="GO" id="GO:0004350">
    <property type="term" value="F:glutamate-5-semialdehyde dehydrogenase activity"/>
    <property type="evidence" value="ECO:0007669"/>
    <property type="project" value="UniProtKB-UniRule"/>
</dbReference>
<dbReference type="GO" id="GO:0050661">
    <property type="term" value="F:NADP binding"/>
    <property type="evidence" value="ECO:0007669"/>
    <property type="project" value="InterPro"/>
</dbReference>
<dbReference type="GO" id="GO:0055129">
    <property type="term" value="P:L-proline biosynthetic process"/>
    <property type="evidence" value="ECO:0007669"/>
    <property type="project" value="UniProtKB-UniRule"/>
</dbReference>
<dbReference type="CDD" id="cd07079">
    <property type="entry name" value="ALDH_F18-19_ProA-GPR"/>
    <property type="match status" value="1"/>
</dbReference>
<dbReference type="FunFam" id="3.40.309.10:FF:000006">
    <property type="entry name" value="Gamma-glutamyl phosphate reductase"/>
    <property type="match status" value="1"/>
</dbReference>
<dbReference type="Gene3D" id="3.40.605.10">
    <property type="entry name" value="Aldehyde Dehydrogenase, Chain A, domain 1"/>
    <property type="match status" value="1"/>
</dbReference>
<dbReference type="Gene3D" id="3.40.309.10">
    <property type="entry name" value="Aldehyde Dehydrogenase, Chain A, domain 2"/>
    <property type="match status" value="1"/>
</dbReference>
<dbReference type="HAMAP" id="MF_00412">
    <property type="entry name" value="ProA"/>
    <property type="match status" value="1"/>
</dbReference>
<dbReference type="InterPro" id="IPR016161">
    <property type="entry name" value="Ald_DH/histidinol_DH"/>
</dbReference>
<dbReference type="InterPro" id="IPR016163">
    <property type="entry name" value="Ald_DH_C"/>
</dbReference>
<dbReference type="InterPro" id="IPR016162">
    <property type="entry name" value="Ald_DH_N"/>
</dbReference>
<dbReference type="InterPro" id="IPR015590">
    <property type="entry name" value="Aldehyde_DH_dom"/>
</dbReference>
<dbReference type="InterPro" id="IPR012134">
    <property type="entry name" value="Glu-5-SA_DH"/>
</dbReference>
<dbReference type="InterPro" id="IPR000965">
    <property type="entry name" value="GPR_dom"/>
</dbReference>
<dbReference type="NCBIfam" id="NF001221">
    <property type="entry name" value="PRK00197.1"/>
    <property type="match status" value="1"/>
</dbReference>
<dbReference type="NCBIfam" id="TIGR00407">
    <property type="entry name" value="proA"/>
    <property type="match status" value="1"/>
</dbReference>
<dbReference type="PANTHER" id="PTHR11063:SF8">
    <property type="entry name" value="DELTA-1-PYRROLINE-5-CARBOXYLATE SYNTHASE"/>
    <property type="match status" value="1"/>
</dbReference>
<dbReference type="PANTHER" id="PTHR11063">
    <property type="entry name" value="GLUTAMATE SEMIALDEHYDE DEHYDROGENASE"/>
    <property type="match status" value="1"/>
</dbReference>
<dbReference type="Pfam" id="PF00171">
    <property type="entry name" value="Aldedh"/>
    <property type="match status" value="1"/>
</dbReference>
<dbReference type="PIRSF" id="PIRSF000151">
    <property type="entry name" value="GPR"/>
    <property type="match status" value="1"/>
</dbReference>
<dbReference type="SUPFAM" id="SSF53720">
    <property type="entry name" value="ALDH-like"/>
    <property type="match status" value="1"/>
</dbReference>